<dbReference type="EMBL" id="CP000860">
    <property type="protein sequence ID" value="ACA59973.1"/>
    <property type="molecule type" value="Genomic_DNA"/>
</dbReference>
<dbReference type="RefSeq" id="WP_012302558.1">
    <property type="nucleotide sequence ID" value="NC_010424.1"/>
</dbReference>
<dbReference type="SMR" id="B1I4S0"/>
<dbReference type="STRING" id="477974.Daud_1467"/>
<dbReference type="KEGG" id="dau:Daud_1467"/>
<dbReference type="eggNOG" id="COG2003">
    <property type="taxonomic scope" value="Bacteria"/>
</dbReference>
<dbReference type="HOGENOM" id="CLU_073529_0_2_9"/>
<dbReference type="OrthoDB" id="9804482at2"/>
<dbReference type="Proteomes" id="UP000008544">
    <property type="component" value="Chromosome"/>
</dbReference>
<dbReference type="GO" id="GO:0046872">
    <property type="term" value="F:metal ion binding"/>
    <property type="evidence" value="ECO:0007669"/>
    <property type="project" value="UniProtKB-KW"/>
</dbReference>
<dbReference type="GO" id="GO:0008237">
    <property type="term" value="F:metallopeptidase activity"/>
    <property type="evidence" value="ECO:0007669"/>
    <property type="project" value="UniProtKB-KW"/>
</dbReference>
<dbReference type="GO" id="GO:0006508">
    <property type="term" value="P:proteolysis"/>
    <property type="evidence" value="ECO:0007669"/>
    <property type="project" value="UniProtKB-KW"/>
</dbReference>
<dbReference type="CDD" id="cd08071">
    <property type="entry name" value="MPN_DUF2466"/>
    <property type="match status" value="1"/>
</dbReference>
<dbReference type="Gene3D" id="1.10.150.20">
    <property type="entry name" value="5' to 3' exonuclease, C-terminal subdomain"/>
    <property type="match status" value="1"/>
</dbReference>
<dbReference type="Gene3D" id="3.40.140.10">
    <property type="entry name" value="Cytidine Deaminase, domain 2"/>
    <property type="match status" value="1"/>
</dbReference>
<dbReference type="InterPro" id="IPR037518">
    <property type="entry name" value="MPN"/>
</dbReference>
<dbReference type="InterPro" id="IPR025657">
    <property type="entry name" value="RadC_JAB"/>
</dbReference>
<dbReference type="InterPro" id="IPR010994">
    <property type="entry name" value="RuvA_2-like"/>
</dbReference>
<dbReference type="InterPro" id="IPR001405">
    <property type="entry name" value="UPF0758"/>
</dbReference>
<dbReference type="InterPro" id="IPR020891">
    <property type="entry name" value="UPF0758_CS"/>
</dbReference>
<dbReference type="InterPro" id="IPR046778">
    <property type="entry name" value="UPF0758_N"/>
</dbReference>
<dbReference type="NCBIfam" id="NF000642">
    <property type="entry name" value="PRK00024.1"/>
    <property type="match status" value="1"/>
</dbReference>
<dbReference type="NCBIfam" id="TIGR00608">
    <property type="entry name" value="radc"/>
    <property type="match status" value="1"/>
</dbReference>
<dbReference type="PANTHER" id="PTHR30471">
    <property type="entry name" value="DNA REPAIR PROTEIN RADC"/>
    <property type="match status" value="1"/>
</dbReference>
<dbReference type="PANTHER" id="PTHR30471:SF3">
    <property type="entry name" value="UPF0758 PROTEIN YEES-RELATED"/>
    <property type="match status" value="1"/>
</dbReference>
<dbReference type="Pfam" id="PF04002">
    <property type="entry name" value="RadC"/>
    <property type="match status" value="1"/>
</dbReference>
<dbReference type="Pfam" id="PF20582">
    <property type="entry name" value="UPF0758_N"/>
    <property type="match status" value="1"/>
</dbReference>
<dbReference type="SUPFAM" id="SSF102712">
    <property type="entry name" value="JAB1/MPN domain"/>
    <property type="match status" value="1"/>
</dbReference>
<dbReference type="SUPFAM" id="SSF47781">
    <property type="entry name" value="RuvA domain 2-like"/>
    <property type="match status" value="1"/>
</dbReference>
<dbReference type="PROSITE" id="PS50249">
    <property type="entry name" value="MPN"/>
    <property type="match status" value="1"/>
</dbReference>
<dbReference type="PROSITE" id="PS01302">
    <property type="entry name" value="UPF0758"/>
    <property type="match status" value="1"/>
</dbReference>
<keyword id="KW-0378">Hydrolase</keyword>
<keyword id="KW-0479">Metal-binding</keyword>
<keyword id="KW-0482">Metalloprotease</keyword>
<keyword id="KW-0645">Protease</keyword>
<keyword id="KW-1185">Reference proteome</keyword>
<keyword id="KW-0862">Zinc</keyword>
<gene>
    <name type="ordered locus">Daud_1467</name>
</gene>
<comment type="similarity">
    <text evidence="2">Belongs to the UPF0758 family.</text>
</comment>
<protein>
    <recommendedName>
        <fullName>UPF0758 protein Daud_1467</fullName>
    </recommendedName>
</protein>
<accession>B1I4S0</accession>
<feature type="chain" id="PRO_1000089813" description="UPF0758 protein Daud_1467">
    <location>
        <begin position="1"/>
        <end position="230"/>
    </location>
</feature>
<feature type="domain" description="MPN" evidence="1">
    <location>
        <begin position="108"/>
        <end position="230"/>
    </location>
</feature>
<feature type="short sequence motif" description="JAMM motif" evidence="1">
    <location>
        <begin position="179"/>
        <end position="192"/>
    </location>
</feature>
<feature type="binding site" evidence="1">
    <location>
        <position position="179"/>
    </location>
    <ligand>
        <name>Zn(2+)</name>
        <dbReference type="ChEBI" id="CHEBI:29105"/>
        <note>catalytic</note>
    </ligand>
</feature>
<feature type="binding site" evidence="1">
    <location>
        <position position="181"/>
    </location>
    <ligand>
        <name>Zn(2+)</name>
        <dbReference type="ChEBI" id="CHEBI:29105"/>
        <note>catalytic</note>
    </ligand>
</feature>
<feature type="binding site" evidence="1">
    <location>
        <position position="192"/>
    </location>
    <ligand>
        <name>Zn(2+)</name>
        <dbReference type="ChEBI" id="CHEBI:29105"/>
        <note>catalytic</note>
    </ligand>
</feature>
<proteinExistence type="inferred from homology"/>
<evidence type="ECO:0000255" key="1">
    <source>
        <dbReference type="PROSITE-ProRule" id="PRU01182"/>
    </source>
</evidence>
<evidence type="ECO:0000305" key="2"/>
<organism>
    <name type="scientific">Desulforudis audaxviator (strain MP104C)</name>
    <dbReference type="NCBI Taxonomy" id="477974"/>
    <lineage>
        <taxon>Bacteria</taxon>
        <taxon>Bacillati</taxon>
        <taxon>Bacillota</taxon>
        <taxon>Clostridia</taxon>
        <taxon>Thermoanaerobacterales</taxon>
        <taxon>Candidatus Desulforudaceae</taxon>
        <taxon>Candidatus Desulforudis</taxon>
    </lineage>
</organism>
<sequence length="230" mass="25161">MAVEYHLTIKEMAAELRPRERLAAHGVQSLSDAELLAILLRSGTVTTTAIDLANQILSRFGGLRGLAEAGIEELQAVKGVGPAKSAEVRAAFELGRRAACRPGEWQPTVRTPEEAAGLVMEEMRYFDREHFWALVLNTKNRVLAVEKVSVGTLNSSSVHPRELFKNAIRRSAAALILVHNHPSGDPAPSPQDIELTQRLFEAGEIVGIKVLDHIIIGDNKFTSLKLEGLF</sequence>
<reference key="1">
    <citation type="submission" date="2007-10" db="EMBL/GenBank/DDBJ databases">
        <title>Complete sequence of chromosome of Desulforudis audaxviator MP104C.</title>
        <authorList>
            <person name="Copeland A."/>
            <person name="Lucas S."/>
            <person name="Lapidus A."/>
            <person name="Barry K."/>
            <person name="Glavina del Rio T."/>
            <person name="Dalin E."/>
            <person name="Tice H."/>
            <person name="Bruce D."/>
            <person name="Pitluck S."/>
            <person name="Lowry S.R."/>
            <person name="Larimer F."/>
            <person name="Land M.L."/>
            <person name="Hauser L."/>
            <person name="Kyrpides N."/>
            <person name="Ivanova N.N."/>
            <person name="Richardson P."/>
        </authorList>
    </citation>
    <scope>NUCLEOTIDE SEQUENCE [LARGE SCALE GENOMIC DNA]</scope>
    <source>
        <strain>MP104C</strain>
    </source>
</reference>
<name>Y1467_DESAP</name>